<protein>
    <recommendedName>
        <fullName>Acetylcholinesterase</fullName>
        <shortName>AChE</shortName>
        <ecNumber>3.1.1.7</ecNumber>
    </recommendedName>
</protein>
<name>ACES_ANOST</name>
<proteinExistence type="inferred from homology"/>
<sequence>MFVNQRTRRPYMSVFVLVLGAAVICPAYGIIDRLVVQTSSGPIRGRSTMVQGREVHVFNGVPFAKPPVDSLRFKKPVPAEPWHGVLDATRLPPSCIQERYEYFPGFAGEEMWNPNTNVSEDCLYLNIWVPTKTRLRHGRGLNFGSNDYFQDDDDFQRQHQSKGGLAMLVWIYGGGFMSGTSTLDIYNAEILAAVGNVIVASMQYRVGAFGFLYLAPYINGYEEDAPGNMGMWDQALAIRWLKENAKAFGGDPDLITLFGESAGGSSVSLHLLSPVTRGLSKRGILQSGTLNAPWSHMTAEKALQIAEGLIDDCNCNLTMLKESPSTVMQCMRNVDAKTISVQQWNSYSGILGFPSAPTIDGVFMTADPMTMLREANLEGIDILVGSNRDEGTYFLLYDFIDYFEKDAATSLPRDKFLEIMNTIFNKASEPEREAIIFQYTGWESGNDGYQNQHQVGRAVGDHFFICPTNEFALGLTERGASVHYYYFTHRTSTSLWGEWMGVLHGDEVEYIFGQPMNASLQYRQRERDLSRRMVLSVSEFARTGNPALEGEHWPLYTRENPIFFIFNAEGEDDLRGEKYGRGPMATSCAFWNDFLPRLRAWSVPSKSPCNLLEQMSIASVSSTMPIVVMVVLVLIPLCAWWWAIKKNKTPPHPQVILETRAFMH</sequence>
<keyword id="KW-1003">Cell membrane</keyword>
<keyword id="KW-1015">Disulfide bond</keyword>
<keyword id="KW-0325">Glycoprotein</keyword>
<keyword id="KW-0336">GPI-anchor</keyword>
<keyword id="KW-0378">Hydrolase</keyword>
<keyword id="KW-0449">Lipoprotein</keyword>
<keyword id="KW-0472">Membrane</keyword>
<keyword id="KW-0531">Neurotransmitter degradation</keyword>
<keyword id="KW-1185">Reference proteome</keyword>
<keyword id="KW-0719">Serine esterase</keyword>
<keyword id="KW-0732">Signal</keyword>
<keyword id="KW-0770">Synapse</keyword>
<organism>
    <name type="scientific">Anopheles stephensi</name>
    <name type="common">Indo-Pakistan malaria mosquito</name>
    <dbReference type="NCBI Taxonomy" id="30069"/>
    <lineage>
        <taxon>Eukaryota</taxon>
        <taxon>Metazoa</taxon>
        <taxon>Ecdysozoa</taxon>
        <taxon>Arthropoda</taxon>
        <taxon>Hexapoda</taxon>
        <taxon>Insecta</taxon>
        <taxon>Pterygota</taxon>
        <taxon>Neoptera</taxon>
        <taxon>Endopterygota</taxon>
        <taxon>Diptera</taxon>
        <taxon>Nematocera</taxon>
        <taxon>Culicoidea</taxon>
        <taxon>Culicidae</taxon>
        <taxon>Anophelinae</taxon>
        <taxon>Anopheles</taxon>
    </lineage>
</organism>
<dbReference type="EC" id="3.1.1.7"/>
<dbReference type="SMR" id="P56161"/>
<dbReference type="STRING" id="30069.P56161"/>
<dbReference type="ESTHER" id="anost-ACHE">
    <property type="family name" value="ACHE"/>
</dbReference>
<dbReference type="MEROPS" id="S09.980"/>
<dbReference type="EnsemblMetazoa" id="ASTE010565-RA">
    <property type="protein sequence ID" value="ASTE010565-PA"/>
    <property type="gene ID" value="ASTE010565"/>
</dbReference>
<dbReference type="VEuPathDB" id="VectorBase:ASTE010565"/>
<dbReference type="VEuPathDB" id="VectorBase:ASTEI01008"/>
<dbReference type="VEuPathDB" id="VectorBase:ASTEI20_039691"/>
<dbReference type="Proteomes" id="UP000076408">
    <property type="component" value="Unassembled WGS sequence"/>
</dbReference>
<dbReference type="GO" id="GO:0005615">
    <property type="term" value="C:extracellular space"/>
    <property type="evidence" value="ECO:0007669"/>
    <property type="project" value="TreeGrafter"/>
</dbReference>
<dbReference type="GO" id="GO:0005886">
    <property type="term" value="C:plasma membrane"/>
    <property type="evidence" value="ECO:0007669"/>
    <property type="project" value="UniProtKB-SubCell"/>
</dbReference>
<dbReference type="GO" id="GO:0098552">
    <property type="term" value="C:side of membrane"/>
    <property type="evidence" value="ECO:0007669"/>
    <property type="project" value="UniProtKB-KW"/>
</dbReference>
<dbReference type="GO" id="GO:0045202">
    <property type="term" value="C:synapse"/>
    <property type="evidence" value="ECO:0007669"/>
    <property type="project" value="UniProtKB-SubCell"/>
</dbReference>
<dbReference type="GO" id="GO:0043083">
    <property type="term" value="C:synaptic cleft"/>
    <property type="evidence" value="ECO:0007669"/>
    <property type="project" value="GOC"/>
</dbReference>
<dbReference type="GO" id="GO:0003990">
    <property type="term" value="F:acetylcholinesterase activity"/>
    <property type="evidence" value="ECO:0007669"/>
    <property type="project" value="UniProtKB-EC"/>
</dbReference>
<dbReference type="GO" id="GO:0001507">
    <property type="term" value="P:acetylcholine catabolic process in synaptic cleft"/>
    <property type="evidence" value="ECO:0007669"/>
    <property type="project" value="InterPro"/>
</dbReference>
<dbReference type="GO" id="GO:0019695">
    <property type="term" value="P:choline metabolic process"/>
    <property type="evidence" value="ECO:0007669"/>
    <property type="project" value="TreeGrafter"/>
</dbReference>
<dbReference type="FunFam" id="3.40.50.1820:FF:000029">
    <property type="entry name" value="Acetylcholinesterase"/>
    <property type="match status" value="1"/>
</dbReference>
<dbReference type="Gene3D" id="3.40.50.1820">
    <property type="entry name" value="alpha/beta hydrolase"/>
    <property type="match status" value="1"/>
</dbReference>
<dbReference type="InterPro" id="IPR029058">
    <property type="entry name" value="AB_hydrolase_fold"/>
</dbReference>
<dbReference type="InterPro" id="IPR050654">
    <property type="entry name" value="AChE-related_enzymes"/>
</dbReference>
<dbReference type="InterPro" id="IPR001445">
    <property type="entry name" value="Acylcholinesterase_insect"/>
</dbReference>
<dbReference type="InterPro" id="IPR002018">
    <property type="entry name" value="CarbesteraseB"/>
</dbReference>
<dbReference type="InterPro" id="IPR019826">
    <property type="entry name" value="Carboxylesterase_B_AS"/>
</dbReference>
<dbReference type="InterPro" id="IPR019819">
    <property type="entry name" value="Carboxylesterase_B_CS"/>
</dbReference>
<dbReference type="InterPro" id="IPR000997">
    <property type="entry name" value="Cholinesterase"/>
</dbReference>
<dbReference type="PANTHER" id="PTHR43918">
    <property type="entry name" value="ACETYLCHOLINESTERASE"/>
    <property type="match status" value="1"/>
</dbReference>
<dbReference type="PANTHER" id="PTHR43918:SF13">
    <property type="entry name" value="ACETYLCHOLINESTERASE"/>
    <property type="match status" value="1"/>
</dbReference>
<dbReference type="Pfam" id="PF00135">
    <property type="entry name" value="COesterase"/>
    <property type="match status" value="1"/>
</dbReference>
<dbReference type="PRINTS" id="PR00880">
    <property type="entry name" value="ACHEINSECT"/>
</dbReference>
<dbReference type="PRINTS" id="PR00878">
    <property type="entry name" value="CHOLNESTRASE"/>
</dbReference>
<dbReference type="SUPFAM" id="SSF53474">
    <property type="entry name" value="alpha/beta-Hydrolases"/>
    <property type="match status" value="1"/>
</dbReference>
<dbReference type="PROSITE" id="PS00122">
    <property type="entry name" value="CARBOXYLESTERASE_B_1"/>
    <property type="match status" value="1"/>
</dbReference>
<dbReference type="PROSITE" id="PS00941">
    <property type="entry name" value="CARBOXYLESTERASE_B_2"/>
    <property type="match status" value="1"/>
</dbReference>
<accession>P56161</accession>
<reference key="1">
    <citation type="journal article" date="1991" name="Cell. Mol. Neurobiol.">
        <title>The acetylcholinesterase gene of Anopheles stephensi.</title>
        <authorList>
            <person name="Hall L.M.C."/>
            <person name="Malcolm C.A."/>
        </authorList>
    </citation>
    <scope>NUCLEOTIDE SEQUENCE [GENOMIC DNA]</scope>
</reference>
<evidence type="ECO:0000250" key="1"/>
<evidence type="ECO:0000255" key="2"/>
<evidence type="ECO:0000255" key="3">
    <source>
        <dbReference type="PROSITE-ProRule" id="PRU10039"/>
    </source>
</evidence>
<evidence type="ECO:0000305" key="4"/>
<comment type="function">
    <text>Rapidly hydrolyzes choline released into the synapse. It can hydrolyze butyrylthiocholine.</text>
</comment>
<comment type="catalytic activity">
    <reaction>
        <text>acetylcholine + H2O = choline + acetate + H(+)</text>
        <dbReference type="Rhea" id="RHEA:17561"/>
        <dbReference type="ChEBI" id="CHEBI:15354"/>
        <dbReference type="ChEBI" id="CHEBI:15355"/>
        <dbReference type="ChEBI" id="CHEBI:15377"/>
        <dbReference type="ChEBI" id="CHEBI:15378"/>
        <dbReference type="ChEBI" id="CHEBI:30089"/>
        <dbReference type="EC" id="3.1.1.7"/>
    </reaction>
</comment>
<comment type="subunit">
    <text evidence="1">Homodimer; disulfide-linked.</text>
</comment>
<comment type="subcellular location">
    <subcellularLocation>
        <location>Synapse</location>
    </subcellularLocation>
    <subcellularLocation>
        <location>Cell membrane</location>
        <topology>Lipid-anchor</topology>
        <topology>GPI-anchor</topology>
    </subcellularLocation>
    <text>Attached to the membrane of the neuronal cholinergic synapses by a GPI-anchor.</text>
</comment>
<comment type="similarity">
    <text evidence="4">Belongs to the type-B carboxylesterase/lipase family.</text>
</comment>
<feature type="signal peptide" evidence="2">
    <location>
        <begin position="1"/>
        <end position="29"/>
    </location>
</feature>
<feature type="chain" id="PRO_0000008600" description="Acetylcholinesterase">
    <location>
        <begin position="30"/>
        <end position="647"/>
    </location>
</feature>
<feature type="propeptide" id="PRO_0000008601" description="Removed in mature form" evidence="2">
    <location>
        <begin position="648"/>
        <end position="664"/>
    </location>
</feature>
<feature type="active site" description="Acyl-ester intermediate" evidence="3">
    <location>
        <position position="261"/>
    </location>
</feature>
<feature type="active site" description="Charge relay system" evidence="1">
    <location>
        <position position="390"/>
    </location>
</feature>
<feature type="active site" description="Charge relay system" evidence="1">
    <location>
        <position position="504"/>
    </location>
</feature>
<feature type="lipid moiety-binding region" description="GPI-anchor amidated asparagine" evidence="2">
    <location>
        <position position="647"/>
    </location>
</feature>
<feature type="glycosylation site" description="N-linked (GlcNAc...) asparagine" evidence="1">
    <location>
        <position position="117"/>
    </location>
</feature>
<feature type="glycosylation site" description="N-linked (GlcNAc...) asparagine" evidence="1">
    <location>
        <position position="316"/>
    </location>
</feature>
<feature type="glycosylation site" description="N-linked (GlcNAc...) asparagine" evidence="1">
    <location>
        <position position="517"/>
    </location>
</feature>
<feature type="disulfide bond" evidence="1">
    <location>
        <begin position="95"/>
        <end position="122"/>
    </location>
</feature>
<feature type="disulfide bond" evidence="1">
    <location>
        <begin position="315"/>
        <end position="330"/>
    </location>
</feature>
<feature type="disulfide bond" evidence="1">
    <location>
        <begin position="466"/>
        <end position="588"/>
    </location>
</feature>